<accession>P25682</accession>
<comment type="function">
    <text evidence="1">May enhance presynaptic acetylcholine release.</text>
</comment>
<comment type="subcellular location">
    <subcellularLocation>
        <location evidence="2">Secreted</location>
    </subcellularLocation>
</comment>
<comment type="tissue specificity">
    <text evidence="4">Expressed by the venom gland.</text>
</comment>
<comment type="toxic dose">
    <text evidence="2">LD(50) is 10 mg/kg by intravenous injection.</text>
</comment>
<comment type="similarity">
    <text evidence="4">Belongs to the three-finger toxin family. Ancestral subfamily. Orphan group XIX sub-subfamily.</text>
</comment>
<evidence type="ECO:0000250" key="1">
    <source>
        <dbReference type="UniProtKB" id="P81782"/>
    </source>
</evidence>
<evidence type="ECO:0000269" key="2">
    <source ref="1"/>
</evidence>
<evidence type="ECO:0000303" key="3">
    <source ref="1"/>
</evidence>
<evidence type="ECO:0000305" key="4"/>
<dbReference type="SMR" id="P25682"/>
<dbReference type="GO" id="GO:0005576">
    <property type="term" value="C:extracellular region"/>
    <property type="evidence" value="ECO:0007669"/>
    <property type="project" value="UniProtKB-SubCell"/>
</dbReference>
<dbReference type="GO" id="GO:0090729">
    <property type="term" value="F:toxin activity"/>
    <property type="evidence" value="ECO:0007669"/>
    <property type="project" value="UniProtKB-KW"/>
</dbReference>
<dbReference type="Gene3D" id="2.10.60.10">
    <property type="entry name" value="CD59"/>
    <property type="match status" value="1"/>
</dbReference>
<dbReference type="InterPro" id="IPR045860">
    <property type="entry name" value="Snake_toxin-like_sf"/>
</dbReference>
<dbReference type="InterPro" id="IPR035076">
    <property type="entry name" value="Toxin/TOLIP"/>
</dbReference>
<dbReference type="Pfam" id="PF00087">
    <property type="entry name" value="Toxin_TOLIP"/>
    <property type="match status" value="1"/>
</dbReference>
<dbReference type="SUPFAM" id="SSF57302">
    <property type="entry name" value="Snake toxin-like"/>
    <property type="match status" value="1"/>
</dbReference>
<sequence length="63" mass="7398">LECYRCGVSGCHLRTTCSAKEKFCAKQHNRISTLWWHGCVETCTEDETWKFYRKCCTTNLCNI</sequence>
<reference key="1">
    <citation type="journal article" date="1979" name="S. Afr. J. Chem.">
        <title>Complete primary structure of toxin S6C6 from Dendroaspis jamesoni kaimosae (Jameson's mamba).</title>
        <authorList>
            <person name="Joubert F.J."/>
            <person name="Taljaard N."/>
        </authorList>
    </citation>
    <scope>PROTEIN SEQUENCE</scope>
    <scope>TOXIC DOSE</scope>
    <scope>SUBCELLULAR LOCATION</scope>
    <source>
        <tissue>Venom</tissue>
    </source>
</reference>
<name>3NOJ6_DENJA</name>
<proteinExistence type="evidence at protein level"/>
<organism>
    <name type="scientific">Dendroaspis jamesoni kaimosae</name>
    <name type="common">Eastern Jameson's mamba</name>
    <dbReference type="NCBI Taxonomy" id="8619"/>
    <lineage>
        <taxon>Eukaryota</taxon>
        <taxon>Metazoa</taxon>
        <taxon>Chordata</taxon>
        <taxon>Craniata</taxon>
        <taxon>Vertebrata</taxon>
        <taxon>Euteleostomi</taxon>
        <taxon>Lepidosauria</taxon>
        <taxon>Squamata</taxon>
        <taxon>Bifurcata</taxon>
        <taxon>Unidentata</taxon>
        <taxon>Episquamata</taxon>
        <taxon>Toxicofera</taxon>
        <taxon>Serpentes</taxon>
        <taxon>Colubroidea</taxon>
        <taxon>Elapidae</taxon>
        <taxon>Elapinae</taxon>
        <taxon>Dendroaspis</taxon>
    </lineage>
</organism>
<protein>
    <recommendedName>
        <fullName evidence="3">Toxin S6C6</fullName>
    </recommendedName>
</protein>
<keyword id="KW-0903">Direct protein sequencing</keyword>
<keyword id="KW-1015">Disulfide bond</keyword>
<keyword id="KW-0528">Neurotoxin</keyword>
<keyword id="KW-0638">Presynaptic neurotoxin</keyword>
<keyword id="KW-0964">Secreted</keyword>
<keyword id="KW-0800">Toxin</keyword>
<feature type="chain" id="PRO_0000093662" description="Toxin S6C6" evidence="2">
    <location>
        <begin position="1"/>
        <end position="63"/>
    </location>
</feature>
<feature type="disulfide bond" evidence="1">
    <location>
        <begin position="3"/>
        <end position="24"/>
    </location>
</feature>
<feature type="disulfide bond" evidence="1">
    <location>
        <begin position="6"/>
        <end position="11"/>
    </location>
</feature>
<feature type="disulfide bond" evidence="1">
    <location>
        <begin position="17"/>
        <end position="39"/>
    </location>
</feature>
<feature type="disulfide bond" evidence="1">
    <location>
        <begin position="43"/>
        <end position="55"/>
    </location>
</feature>
<feature type="disulfide bond" evidence="1">
    <location>
        <begin position="56"/>
        <end position="61"/>
    </location>
</feature>